<sequence>MGLIAMSERDLQRIEVLSKVIDGRMTMVSAAHVLGLSTRQVRRLLDRISAGGAASIRHKAIGRPSNNRICDGVRDYAMAIVRERYADFGPTLAAEKLAELDGLTVSRETLRQWMADAGLWLSRKQRRTFHQPRLRREAYGELVQIDGSEHRWFEDRGDPCSLLVFIDDATGKLMQLRFVRSESAFTYFEALELYLKAHGAPVAFYSDKHSVFRVAKKDAKGGQGMTQFGRALCELNIEILCANSSQAKGRVERMNRTLQDRLIKDLRLEGICGMDDGNAFLPRFMERYNRQFAITPARSDDLHRPLNLAPDRLRDVLCKREQRYVGAQLTFSFERQRIMLEENEVTRGLVGRYVETHAYADGRLDVRWKGHSLPYRVFDKDQRVTHAAIIENKRLSDVLAYIKERQDERPAPKVRTNSEKNGYTPRGRKPGKRTDFMNDPVVIARRRQALSNLDAAE</sequence>
<feature type="chain" id="PRO_0000075459" description="Putative transposase y4bF">
    <location>
        <begin position="1"/>
        <end position="457"/>
    </location>
</feature>
<feature type="domain" description="Integrase catalytic" evidence="1">
    <location>
        <begin position="128"/>
        <end position="313"/>
    </location>
</feature>
<feature type="region of interest" description="Disordered" evidence="2">
    <location>
        <begin position="406"/>
        <end position="440"/>
    </location>
</feature>
<name>Y4BF_SINFN</name>
<dbReference type="EMBL" id="U00090">
    <property type="protein sequence ID" value="AAB91621.1"/>
    <property type="molecule type" value="Genomic_DNA"/>
</dbReference>
<dbReference type="RefSeq" id="NP_443783.1">
    <property type="nucleotide sequence ID" value="NC_000914.2"/>
</dbReference>
<dbReference type="RefSeq" id="WP_010875066.1">
    <property type="nucleotide sequence ID" value="NC_000914.2"/>
</dbReference>
<dbReference type="STRING" id="394.NGR_c15960"/>
<dbReference type="KEGG" id="rhi:NGR_a00240"/>
<dbReference type="PATRIC" id="fig|394.7.peg.19"/>
<dbReference type="eggNOG" id="COG2801">
    <property type="taxonomic scope" value="Bacteria"/>
</dbReference>
<dbReference type="HOGENOM" id="CLU_041517_0_2_5"/>
<dbReference type="OrthoDB" id="7319221at2"/>
<dbReference type="Proteomes" id="UP000001054">
    <property type="component" value="Plasmid pNGR234a"/>
</dbReference>
<dbReference type="GO" id="GO:0003677">
    <property type="term" value="F:DNA binding"/>
    <property type="evidence" value="ECO:0007669"/>
    <property type="project" value="UniProtKB-KW"/>
</dbReference>
<dbReference type="GO" id="GO:0015074">
    <property type="term" value="P:DNA integration"/>
    <property type="evidence" value="ECO:0007669"/>
    <property type="project" value="InterPro"/>
</dbReference>
<dbReference type="GO" id="GO:0006310">
    <property type="term" value="P:DNA recombination"/>
    <property type="evidence" value="ECO:0007669"/>
    <property type="project" value="UniProtKB-KW"/>
</dbReference>
<dbReference type="GO" id="GO:0032196">
    <property type="term" value="P:transposition"/>
    <property type="evidence" value="ECO:0007669"/>
    <property type="project" value="UniProtKB-KW"/>
</dbReference>
<dbReference type="Gene3D" id="3.30.420.10">
    <property type="entry name" value="Ribonuclease H-like superfamily/Ribonuclease H"/>
    <property type="match status" value="1"/>
</dbReference>
<dbReference type="InterPro" id="IPR009057">
    <property type="entry name" value="Homeodomain-like_sf"/>
</dbReference>
<dbReference type="InterPro" id="IPR001584">
    <property type="entry name" value="Integrase_cat-core"/>
</dbReference>
<dbReference type="InterPro" id="IPR047797">
    <property type="entry name" value="ISNCY_transpos"/>
</dbReference>
<dbReference type="InterPro" id="IPR012337">
    <property type="entry name" value="RNaseH-like_sf"/>
</dbReference>
<dbReference type="InterPro" id="IPR036397">
    <property type="entry name" value="RNaseH_sf"/>
</dbReference>
<dbReference type="NCBIfam" id="NF033594">
    <property type="entry name" value="transpos_ISNCY_2"/>
    <property type="match status" value="1"/>
</dbReference>
<dbReference type="PANTHER" id="PTHR35004:SF7">
    <property type="entry name" value="INTEGRASE PROTEIN"/>
    <property type="match status" value="1"/>
</dbReference>
<dbReference type="PANTHER" id="PTHR35004">
    <property type="entry name" value="TRANSPOSASE RV3428C-RELATED"/>
    <property type="match status" value="1"/>
</dbReference>
<dbReference type="Pfam" id="PF13551">
    <property type="entry name" value="HTH_29"/>
    <property type="match status" value="1"/>
</dbReference>
<dbReference type="SUPFAM" id="SSF46689">
    <property type="entry name" value="Homeodomain-like"/>
    <property type="match status" value="1"/>
</dbReference>
<dbReference type="SUPFAM" id="SSF53098">
    <property type="entry name" value="Ribonuclease H-like"/>
    <property type="match status" value="1"/>
</dbReference>
<dbReference type="PROSITE" id="PS50994">
    <property type="entry name" value="INTEGRASE"/>
    <property type="match status" value="1"/>
</dbReference>
<keyword id="KW-0233">DNA recombination</keyword>
<keyword id="KW-0238">DNA-binding</keyword>
<keyword id="KW-0614">Plasmid</keyword>
<keyword id="KW-1185">Reference proteome</keyword>
<keyword id="KW-0814">Transposable element</keyword>
<keyword id="KW-0815">Transposition</keyword>
<reference key="1">
    <citation type="journal article" date="1997" name="Nature">
        <title>Molecular basis of symbiosis between Rhizobium and legumes.</title>
        <authorList>
            <person name="Freiberg C.A."/>
            <person name="Fellay R."/>
            <person name="Bairoch A."/>
            <person name="Broughton W.J."/>
            <person name="Rosenthal A."/>
            <person name="Perret X."/>
        </authorList>
    </citation>
    <scope>NUCLEOTIDE SEQUENCE [LARGE SCALE GENOMIC DNA]</scope>
    <source>
        <strain>NBRC 101917 / NGR234</strain>
    </source>
</reference>
<reference key="2">
    <citation type="journal article" date="2009" name="Appl. Environ. Microbiol.">
        <title>Rhizobium sp. strain NGR234 possesses a remarkable number of secretion systems.</title>
        <authorList>
            <person name="Schmeisser C."/>
            <person name="Liesegang H."/>
            <person name="Krysciak D."/>
            <person name="Bakkou N."/>
            <person name="Le Quere A."/>
            <person name="Wollherr A."/>
            <person name="Heinemeyer I."/>
            <person name="Morgenstern B."/>
            <person name="Pommerening-Roeser A."/>
            <person name="Flores M."/>
            <person name="Palacios R."/>
            <person name="Brenner S."/>
            <person name="Gottschalk G."/>
            <person name="Schmitz R.A."/>
            <person name="Broughton W.J."/>
            <person name="Perret X."/>
            <person name="Strittmatter A.W."/>
            <person name="Streit W.R."/>
        </authorList>
    </citation>
    <scope>NUCLEOTIDE SEQUENCE [LARGE SCALE GENOMIC DNA]</scope>
    <source>
        <strain>NBRC 101917 / NGR234</strain>
    </source>
</reference>
<organism>
    <name type="scientific">Sinorhizobium fredii (strain NBRC 101917 / NGR234)</name>
    <dbReference type="NCBI Taxonomy" id="394"/>
    <lineage>
        <taxon>Bacteria</taxon>
        <taxon>Pseudomonadati</taxon>
        <taxon>Pseudomonadota</taxon>
        <taxon>Alphaproteobacteria</taxon>
        <taxon>Hyphomicrobiales</taxon>
        <taxon>Rhizobiaceae</taxon>
        <taxon>Sinorhizobium/Ensifer group</taxon>
        <taxon>Sinorhizobium</taxon>
    </lineage>
</organism>
<accession>P55373</accession>
<evidence type="ECO:0000255" key="1">
    <source>
        <dbReference type="PROSITE-ProRule" id="PRU00457"/>
    </source>
</evidence>
<evidence type="ECO:0000256" key="2">
    <source>
        <dbReference type="SAM" id="MobiDB-lite"/>
    </source>
</evidence>
<proteinExistence type="predicted"/>
<geneLocation type="plasmid">
    <name>sym pNGR234a</name>
</geneLocation>
<protein>
    <recommendedName>
        <fullName>Putative transposase y4bF</fullName>
    </recommendedName>
</protein>
<gene>
    <name type="ordered locus">NGR_a00240</name>
    <name type="ORF">y4bF</name>
</gene>